<organism>
    <name type="scientific">Acidithiobacillus ferrooxidans (strain ATCC 23270 / DSM 14882 / CIP 104768 / NCIMB 8455)</name>
    <name type="common">Ferrobacillus ferrooxidans (strain ATCC 23270)</name>
    <dbReference type="NCBI Taxonomy" id="243159"/>
    <lineage>
        <taxon>Bacteria</taxon>
        <taxon>Pseudomonadati</taxon>
        <taxon>Pseudomonadota</taxon>
        <taxon>Acidithiobacillia</taxon>
        <taxon>Acidithiobacillales</taxon>
        <taxon>Acidithiobacillaceae</taxon>
        <taxon>Acidithiobacillus</taxon>
    </lineage>
</organism>
<evidence type="ECO:0000255" key="1">
    <source>
        <dbReference type="HAMAP-Rule" id="MF_01346"/>
    </source>
</evidence>
<comment type="function">
    <text evidence="1">Produces ATP from ADP in the presence of a proton gradient across the membrane. The alpha chain is a regulatory subunit.</text>
</comment>
<comment type="catalytic activity">
    <reaction evidence="1">
        <text>ATP + H2O + 4 H(+)(in) = ADP + phosphate + 5 H(+)(out)</text>
        <dbReference type="Rhea" id="RHEA:57720"/>
        <dbReference type="ChEBI" id="CHEBI:15377"/>
        <dbReference type="ChEBI" id="CHEBI:15378"/>
        <dbReference type="ChEBI" id="CHEBI:30616"/>
        <dbReference type="ChEBI" id="CHEBI:43474"/>
        <dbReference type="ChEBI" id="CHEBI:456216"/>
        <dbReference type="EC" id="7.1.2.2"/>
    </reaction>
</comment>
<comment type="subunit">
    <text evidence="1">F-type ATPases have 2 components, CF(1) - the catalytic core - and CF(0) - the membrane proton channel. CF(1) has five subunits: alpha(3), beta(3), gamma(1), delta(1), epsilon(1). CF(0) has three main subunits: a(1), b(2) and c(9-12). The alpha and beta chains form an alternating ring which encloses part of the gamma chain. CF(1) is attached to CF(0) by a central stalk formed by the gamma and epsilon chains, while a peripheral stalk is formed by the delta and b chains.</text>
</comment>
<comment type="subcellular location">
    <subcellularLocation>
        <location evidence="1">Cell inner membrane</location>
        <topology evidence="1">Peripheral membrane protein</topology>
    </subcellularLocation>
</comment>
<comment type="similarity">
    <text evidence="1">Belongs to the ATPase alpha/beta chains family.</text>
</comment>
<keyword id="KW-0066">ATP synthesis</keyword>
<keyword id="KW-0067">ATP-binding</keyword>
<keyword id="KW-0997">Cell inner membrane</keyword>
<keyword id="KW-1003">Cell membrane</keyword>
<keyword id="KW-0139">CF(1)</keyword>
<keyword id="KW-0375">Hydrogen ion transport</keyword>
<keyword id="KW-0406">Ion transport</keyword>
<keyword id="KW-0472">Membrane</keyword>
<keyword id="KW-0547">Nucleotide-binding</keyword>
<keyword id="KW-1185">Reference proteome</keyword>
<keyword id="KW-1278">Translocase</keyword>
<keyword id="KW-0813">Transport</keyword>
<sequence>MQQLNPSEISELIRARIAGFEGRVETRSQGTIISLSDGILRIHGLEDVMYGEMLELPGGRFGLAMNLEQDNVGAVVLGEFSGLQEGDVVKCTGRVMQVPIGKALLGRVVNALGQPVDGKGAIDAEEFDVLEKIAPGVIDRQSVDEPMQTGIKSIDAMVPIGRGQRELIIGDRQTGKTAVAVDAILNQKGKDVQCIYVAIGQKASTVAGVVRKLEEYGAMEYTTVIAANASESAAMQYLAPYAGCTMGEYFRDRGMNALIVYDDLTKQAWAYRQISLLLRRPPGREAYPGDVFYLHSRLLERAARVNADFVEKFTKGEVKGKTGSLTALPIIETQAGDVSAFVPTNVISITDGQIYLETDLFNAGIRPAINAGLSVSRVGGAAQTKIIKKLGGGIRLDLAQYRELAAFAQFASDLDEITRKQIERGKRVTELLKQDQFSPMSVAEQGAALFAASSGALDDVEVANVRPFEKALLAYLNSNNKELMAGIEEKKDLTDDLKKQLDAAVKQFKSGSTY</sequence>
<reference key="1">
    <citation type="journal article" date="2008" name="BMC Genomics">
        <title>Acidithiobacillus ferrooxidans metabolism: from genome sequence to industrial applications.</title>
        <authorList>
            <person name="Valdes J."/>
            <person name="Pedroso I."/>
            <person name="Quatrini R."/>
            <person name="Dodson R.J."/>
            <person name="Tettelin H."/>
            <person name="Blake R. II"/>
            <person name="Eisen J.A."/>
            <person name="Holmes D.S."/>
        </authorList>
    </citation>
    <scope>NUCLEOTIDE SEQUENCE [LARGE SCALE GENOMIC DNA]</scope>
    <source>
        <strain>ATCC 23270 / DSM 14882 / CIP 104768 / NCIMB 8455</strain>
    </source>
</reference>
<dbReference type="EC" id="7.1.2.2" evidence="1"/>
<dbReference type="EMBL" id="CP001219">
    <property type="protein sequence ID" value="ACK78244.1"/>
    <property type="molecule type" value="Genomic_DNA"/>
</dbReference>
<dbReference type="RefSeq" id="WP_012537657.1">
    <property type="nucleotide sequence ID" value="NC_011761.1"/>
</dbReference>
<dbReference type="SMR" id="B7JB86"/>
<dbReference type="STRING" id="243159.AFE_3205"/>
<dbReference type="PaxDb" id="243159-AFE_3205"/>
<dbReference type="GeneID" id="65282189"/>
<dbReference type="KEGG" id="afr:AFE_3205"/>
<dbReference type="eggNOG" id="COG0056">
    <property type="taxonomic scope" value="Bacteria"/>
</dbReference>
<dbReference type="HOGENOM" id="CLU_010091_2_1_6"/>
<dbReference type="Proteomes" id="UP000001362">
    <property type="component" value="Chromosome"/>
</dbReference>
<dbReference type="GO" id="GO:0005886">
    <property type="term" value="C:plasma membrane"/>
    <property type="evidence" value="ECO:0007669"/>
    <property type="project" value="UniProtKB-SubCell"/>
</dbReference>
<dbReference type="GO" id="GO:0045259">
    <property type="term" value="C:proton-transporting ATP synthase complex"/>
    <property type="evidence" value="ECO:0007669"/>
    <property type="project" value="UniProtKB-KW"/>
</dbReference>
<dbReference type="GO" id="GO:0043531">
    <property type="term" value="F:ADP binding"/>
    <property type="evidence" value="ECO:0007669"/>
    <property type="project" value="TreeGrafter"/>
</dbReference>
<dbReference type="GO" id="GO:0005524">
    <property type="term" value="F:ATP binding"/>
    <property type="evidence" value="ECO:0007669"/>
    <property type="project" value="UniProtKB-UniRule"/>
</dbReference>
<dbReference type="GO" id="GO:0046933">
    <property type="term" value="F:proton-transporting ATP synthase activity, rotational mechanism"/>
    <property type="evidence" value="ECO:0007669"/>
    <property type="project" value="UniProtKB-UniRule"/>
</dbReference>
<dbReference type="CDD" id="cd18113">
    <property type="entry name" value="ATP-synt_F1_alpha_C"/>
    <property type="match status" value="1"/>
</dbReference>
<dbReference type="CDD" id="cd18116">
    <property type="entry name" value="ATP-synt_F1_alpha_N"/>
    <property type="match status" value="1"/>
</dbReference>
<dbReference type="CDD" id="cd01132">
    <property type="entry name" value="F1-ATPase_alpha_CD"/>
    <property type="match status" value="1"/>
</dbReference>
<dbReference type="FunFam" id="1.20.150.20:FF:000001">
    <property type="entry name" value="ATP synthase subunit alpha"/>
    <property type="match status" value="1"/>
</dbReference>
<dbReference type="FunFam" id="2.40.30.20:FF:000001">
    <property type="entry name" value="ATP synthase subunit alpha"/>
    <property type="match status" value="1"/>
</dbReference>
<dbReference type="FunFam" id="3.40.50.300:FF:000002">
    <property type="entry name" value="ATP synthase subunit alpha"/>
    <property type="match status" value="1"/>
</dbReference>
<dbReference type="Gene3D" id="2.40.30.20">
    <property type="match status" value="1"/>
</dbReference>
<dbReference type="Gene3D" id="1.20.150.20">
    <property type="entry name" value="ATP synthase alpha/beta chain, C-terminal domain"/>
    <property type="match status" value="1"/>
</dbReference>
<dbReference type="Gene3D" id="3.40.50.300">
    <property type="entry name" value="P-loop containing nucleotide triphosphate hydrolases"/>
    <property type="match status" value="1"/>
</dbReference>
<dbReference type="HAMAP" id="MF_01346">
    <property type="entry name" value="ATP_synth_alpha_bact"/>
    <property type="match status" value="1"/>
</dbReference>
<dbReference type="InterPro" id="IPR023366">
    <property type="entry name" value="ATP_synth_asu-like_sf"/>
</dbReference>
<dbReference type="InterPro" id="IPR000793">
    <property type="entry name" value="ATP_synth_asu_C"/>
</dbReference>
<dbReference type="InterPro" id="IPR038376">
    <property type="entry name" value="ATP_synth_asu_C_sf"/>
</dbReference>
<dbReference type="InterPro" id="IPR033732">
    <property type="entry name" value="ATP_synth_F1_a_nt-bd_dom"/>
</dbReference>
<dbReference type="InterPro" id="IPR005294">
    <property type="entry name" value="ATP_synth_F1_asu"/>
</dbReference>
<dbReference type="InterPro" id="IPR020003">
    <property type="entry name" value="ATPase_a/bsu_AS"/>
</dbReference>
<dbReference type="InterPro" id="IPR004100">
    <property type="entry name" value="ATPase_F1/V1/A1_a/bsu_N"/>
</dbReference>
<dbReference type="InterPro" id="IPR036121">
    <property type="entry name" value="ATPase_F1/V1/A1_a/bsu_N_sf"/>
</dbReference>
<dbReference type="InterPro" id="IPR000194">
    <property type="entry name" value="ATPase_F1/V1/A1_a/bsu_nucl-bd"/>
</dbReference>
<dbReference type="InterPro" id="IPR027417">
    <property type="entry name" value="P-loop_NTPase"/>
</dbReference>
<dbReference type="NCBIfam" id="TIGR00962">
    <property type="entry name" value="atpA"/>
    <property type="match status" value="1"/>
</dbReference>
<dbReference type="NCBIfam" id="NF009884">
    <property type="entry name" value="PRK13343.1"/>
    <property type="match status" value="1"/>
</dbReference>
<dbReference type="PANTHER" id="PTHR48082">
    <property type="entry name" value="ATP SYNTHASE SUBUNIT ALPHA, MITOCHONDRIAL"/>
    <property type="match status" value="1"/>
</dbReference>
<dbReference type="PANTHER" id="PTHR48082:SF2">
    <property type="entry name" value="ATP SYNTHASE SUBUNIT ALPHA, MITOCHONDRIAL"/>
    <property type="match status" value="1"/>
</dbReference>
<dbReference type="Pfam" id="PF00006">
    <property type="entry name" value="ATP-synt_ab"/>
    <property type="match status" value="1"/>
</dbReference>
<dbReference type="Pfam" id="PF00306">
    <property type="entry name" value="ATP-synt_ab_C"/>
    <property type="match status" value="1"/>
</dbReference>
<dbReference type="Pfam" id="PF02874">
    <property type="entry name" value="ATP-synt_ab_N"/>
    <property type="match status" value="1"/>
</dbReference>
<dbReference type="PIRSF" id="PIRSF039088">
    <property type="entry name" value="F_ATPase_subunit_alpha"/>
    <property type="match status" value="1"/>
</dbReference>
<dbReference type="SUPFAM" id="SSF47917">
    <property type="entry name" value="C-terminal domain of alpha and beta subunits of F1 ATP synthase"/>
    <property type="match status" value="1"/>
</dbReference>
<dbReference type="SUPFAM" id="SSF50615">
    <property type="entry name" value="N-terminal domain of alpha and beta subunits of F1 ATP synthase"/>
    <property type="match status" value="1"/>
</dbReference>
<dbReference type="SUPFAM" id="SSF52540">
    <property type="entry name" value="P-loop containing nucleoside triphosphate hydrolases"/>
    <property type="match status" value="1"/>
</dbReference>
<dbReference type="PROSITE" id="PS00152">
    <property type="entry name" value="ATPASE_ALPHA_BETA"/>
    <property type="match status" value="1"/>
</dbReference>
<protein>
    <recommendedName>
        <fullName evidence="1">ATP synthase subunit alpha</fullName>
        <ecNumber evidence="1">7.1.2.2</ecNumber>
    </recommendedName>
    <alternativeName>
        <fullName evidence="1">ATP synthase F1 sector subunit alpha</fullName>
    </alternativeName>
    <alternativeName>
        <fullName evidence="1">F-ATPase subunit alpha</fullName>
    </alternativeName>
</protein>
<name>ATPA_ACIF2</name>
<accession>B7JB86</accession>
<feature type="chain" id="PRO_1000143332" description="ATP synthase subunit alpha">
    <location>
        <begin position="1"/>
        <end position="514"/>
    </location>
</feature>
<feature type="binding site" evidence="1">
    <location>
        <begin position="170"/>
        <end position="177"/>
    </location>
    <ligand>
        <name>ATP</name>
        <dbReference type="ChEBI" id="CHEBI:30616"/>
    </ligand>
</feature>
<feature type="site" description="Required for activity" evidence="1">
    <location>
        <position position="374"/>
    </location>
</feature>
<proteinExistence type="inferred from homology"/>
<gene>
    <name evidence="1" type="primary">atpA</name>
    <name type="ordered locus">AFE_3205</name>
</gene>